<comment type="function">
    <text evidence="1">NDH-1 shuttles electrons from NADH, via FMN and iron-sulfur (Fe-S) centers, to quinones in the respiratory chain. The immediate electron acceptor for the enzyme in this species is believed to be ubiquinone. Couples the redox reaction to proton translocation (for every two electrons transferred, four hydrogen ions are translocated across the cytoplasmic membrane), and thus conserves the redox energy in a proton gradient.</text>
</comment>
<comment type="catalytic activity">
    <reaction evidence="1">
        <text>a quinone + NADH + 5 H(+)(in) = a quinol + NAD(+) + 4 H(+)(out)</text>
        <dbReference type="Rhea" id="RHEA:57888"/>
        <dbReference type="ChEBI" id="CHEBI:15378"/>
        <dbReference type="ChEBI" id="CHEBI:24646"/>
        <dbReference type="ChEBI" id="CHEBI:57540"/>
        <dbReference type="ChEBI" id="CHEBI:57945"/>
        <dbReference type="ChEBI" id="CHEBI:132124"/>
    </reaction>
</comment>
<comment type="cofactor">
    <cofactor evidence="1">
        <name>[4Fe-4S] cluster</name>
        <dbReference type="ChEBI" id="CHEBI:49883"/>
    </cofactor>
    <text evidence="1">Binds 2 [4Fe-4S] clusters per subunit.</text>
</comment>
<comment type="subunit">
    <text evidence="1">NDH-1 is composed of 14 different subunits. Subunits NuoA, H, J, K, L, M, N constitute the membrane sector of the complex.</text>
</comment>
<comment type="subcellular location">
    <subcellularLocation>
        <location evidence="1">Cell inner membrane</location>
        <topology evidence="1">Peripheral membrane protein</topology>
    </subcellularLocation>
</comment>
<comment type="similarity">
    <text evidence="1">Belongs to the complex I 23 kDa subunit family.</text>
</comment>
<protein>
    <recommendedName>
        <fullName evidence="1">NADH-quinone oxidoreductase subunit I 2</fullName>
        <ecNumber evidence="1">7.1.1.-</ecNumber>
    </recommendedName>
    <alternativeName>
        <fullName evidence="1">NADH dehydrogenase I subunit I 2</fullName>
    </alternativeName>
    <alternativeName>
        <fullName evidence="1">NDH-1 subunit I 2</fullName>
    </alternativeName>
</protein>
<keyword id="KW-0004">4Fe-4S</keyword>
<keyword id="KW-0997">Cell inner membrane</keyword>
<keyword id="KW-1003">Cell membrane</keyword>
<keyword id="KW-0408">Iron</keyword>
<keyword id="KW-0411">Iron-sulfur</keyword>
<keyword id="KW-0472">Membrane</keyword>
<keyword id="KW-0479">Metal-binding</keyword>
<keyword id="KW-0520">NAD</keyword>
<keyword id="KW-0874">Quinone</keyword>
<keyword id="KW-1185">Reference proteome</keyword>
<keyword id="KW-0677">Repeat</keyword>
<keyword id="KW-1278">Translocase</keyword>
<keyword id="KW-0830">Ubiquinone</keyword>
<reference key="1">
    <citation type="journal article" date="2009" name="BMC Microbiol.">
        <title>The genome sequence of Geobacter metallireducens: features of metabolism, physiology and regulation common and dissimilar to Geobacter sulfurreducens.</title>
        <authorList>
            <person name="Aklujkar M."/>
            <person name="Krushkal J."/>
            <person name="DiBartolo G."/>
            <person name="Lapidus A."/>
            <person name="Land M.L."/>
            <person name="Lovley D.R."/>
        </authorList>
    </citation>
    <scope>NUCLEOTIDE SEQUENCE [LARGE SCALE GENOMIC DNA]</scope>
    <source>
        <strain>ATCC 53774 / DSM 7210 / GS-15</strain>
    </source>
</reference>
<dbReference type="EC" id="7.1.1.-" evidence="1"/>
<dbReference type="EMBL" id="CP000148">
    <property type="protein sequence ID" value="ABB33559.1"/>
    <property type="molecule type" value="Genomic_DNA"/>
</dbReference>
<dbReference type="SMR" id="Q39QB5"/>
<dbReference type="STRING" id="269799.Gmet_3347"/>
<dbReference type="KEGG" id="gme:Gmet_3347"/>
<dbReference type="eggNOG" id="COG1143">
    <property type="taxonomic scope" value="Bacteria"/>
</dbReference>
<dbReference type="HOGENOM" id="CLU_067218_5_1_7"/>
<dbReference type="Proteomes" id="UP000007073">
    <property type="component" value="Chromosome"/>
</dbReference>
<dbReference type="GO" id="GO:0005886">
    <property type="term" value="C:plasma membrane"/>
    <property type="evidence" value="ECO:0007669"/>
    <property type="project" value="UniProtKB-SubCell"/>
</dbReference>
<dbReference type="GO" id="GO:0051539">
    <property type="term" value="F:4 iron, 4 sulfur cluster binding"/>
    <property type="evidence" value="ECO:0007669"/>
    <property type="project" value="UniProtKB-KW"/>
</dbReference>
<dbReference type="GO" id="GO:0005506">
    <property type="term" value="F:iron ion binding"/>
    <property type="evidence" value="ECO:0007669"/>
    <property type="project" value="UniProtKB-UniRule"/>
</dbReference>
<dbReference type="GO" id="GO:0050136">
    <property type="term" value="F:NADH:ubiquinone reductase (non-electrogenic) activity"/>
    <property type="evidence" value="ECO:0007669"/>
    <property type="project" value="UniProtKB-UniRule"/>
</dbReference>
<dbReference type="GO" id="GO:0048038">
    <property type="term" value="F:quinone binding"/>
    <property type="evidence" value="ECO:0007669"/>
    <property type="project" value="UniProtKB-KW"/>
</dbReference>
<dbReference type="Gene3D" id="3.30.70.3270">
    <property type="match status" value="1"/>
</dbReference>
<dbReference type="HAMAP" id="MF_01351">
    <property type="entry name" value="NDH1_NuoI"/>
    <property type="match status" value="1"/>
</dbReference>
<dbReference type="InterPro" id="IPR017896">
    <property type="entry name" value="4Fe4S_Fe-S-bd"/>
</dbReference>
<dbReference type="InterPro" id="IPR017900">
    <property type="entry name" value="4Fe4S_Fe_S_CS"/>
</dbReference>
<dbReference type="InterPro" id="IPR010226">
    <property type="entry name" value="NADH_quinone_OxRdtase_chainI"/>
</dbReference>
<dbReference type="NCBIfam" id="TIGR01971">
    <property type="entry name" value="NuoI"/>
    <property type="match status" value="1"/>
</dbReference>
<dbReference type="NCBIfam" id="NF004538">
    <property type="entry name" value="PRK05888.1-4"/>
    <property type="match status" value="1"/>
</dbReference>
<dbReference type="PANTHER" id="PTHR10849">
    <property type="entry name" value="NADH DEHYDROGENASE UBIQUINONE IRON-SULFUR PROTEIN 8, MITOCHONDRIAL"/>
    <property type="match status" value="1"/>
</dbReference>
<dbReference type="PANTHER" id="PTHR10849:SF24">
    <property type="entry name" value="NADH-QUINONE OXIDOREDUCTASE SUBUNIT I 2"/>
    <property type="match status" value="1"/>
</dbReference>
<dbReference type="Pfam" id="PF00037">
    <property type="entry name" value="Fer4"/>
    <property type="match status" value="1"/>
</dbReference>
<dbReference type="SUPFAM" id="SSF54862">
    <property type="entry name" value="4Fe-4S ferredoxins"/>
    <property type="match status" value="1"/>
</dbReference>
<dbReference type="PROSITE" id="PS00198">
    <property type="entry name" value="4FE4S_FER_1"/>
    <property type="match status" value="1"/>
</dbReference>
<dbReference type="PROSITE" id="PS51379">
    <property type="entry name" value="4FE4S_FER_2"/>
    <property type="match status" value="2"/>
</dbReference>
<organism>
    <name type="scientific">Geobacter metallireducens (strain ATCC 53774 / DSM 7210 / GS-15)</name>
    <dbReference type="NCBI Taxonomy" id="269799"/>
    <lineage>
        <taxon>Bacteria</taxon>
        <taxon>Pseudomonadati</taxon>
        <taxon>Thermodesulfobacteriota</taxon>
        <taxon>Desulfuromonadia</taxon>
        <taxon>Geobacterales</taxon>
        <taxon>Geobacteraceae</taxon>
        <taxon>Geobacter</taxon>
    </lineage>
</organism>
<sequence length="131" mass="15085">MIMPLINGLKITLKHMFMKPVTLQYPDERPTPSPNFRGLHALKVSHSKAKCVCCYLCPTVCPAKCITVEAGEDQEHNKYAERYEIDMLRCIFCGYCVEACPVDALKMTGEFELANYKREDFVFVKERLLEK</sequence>
<evidence type="ECO:0000255" key="1">
    <source>
        <dbReference type="HAMAP-Rule" id="MF_01351"/>
    </source>
</evidence>
<feature type="chain" id="PRO_0000245708" description="NADH-quinone oxidoreductase subunit I 2">
    <location>
        <begin position="1"/>
        <end position="131"/>
    </location>
</feature>
<feature type="domain" description="4Fe-4S ferredoxin-type 1" evidence="1">
    <location>
        <begin position="42"/>
        <end position="71"/>
    </location>
</feature>
<feature type="domain" description="4Fe-4S ferredoxin-type 2" evidence="1">
    <location>
        <begin position="81"/>
        <end position="110"/>
    </location>
</feature>
<feature type="binding site" evidence="1">
    <location>
        <position position="51"/>
    </location>
    <ligand>
        <name>[4Fe-4S] cluster</name>
        <dbReference type="ChEBI" id="CHEBI:49883"/>
        <label>1</label>
    </ligand>
</feature>
<feature type="binding site" evidence="1">
    <location>
        <position position="54"/>
    </location>
    <ligand>
        <name>[4Fe-4S] cluster</name>
        <dbReference type="ChEBI" id="CHEBI:49883"/>
        <label>1</label>
    </ligand>
</feature>
<feature type="binding site" evidence="1">
    <location>
        <position position="57"/>
    </location>
    <ligand>
        <name>[4Fe-4S] cluster</name>
        <dbReference type="ChEBI" id="CHEBI:49883"/>
        <label>1</label>
    </ligand>
</feature>
<feature type="binding site" evidence="1">
    <location>
        <position position="61"/>
    </location>
    <ligand>
        <name>[4Fe-4S] cluster</name>
        <dbReference type="ChEBI" id="CHEBI:49883"/>
        <label>2</label>
    </ligand>
</feature>
<feature type="binding site" evidence="1">
    <location>
        <position position="90"/>
    </location>
    <ligand>
        <name>[4Fe-4S] cluster</name>
        <dbReference type="ChEBI" id="CHEBI:49883"/>
        <label>2</label>
    </ligand>
</feature>
<feature type="binding site" evidence="1">
    <location>
        <position position="93"/>
    </location>
    <ligand>
        <name>[4Fe-4S] cluster</name>
        <dbReference type="ChEBI" id="CHEBI:49883"/>
        <label>2</label>
    </ligand>
</feature>
<feature type="binding site" evidence="1">
    <location>
        <position position="96"/>
    </location>
    <ligand>
        <name>[4Fe-4S] cluster</name>
        <dbReference type="ChEBI" id="CHEBI:49883"/>
        <label>2</label>
    </ligand>
</feature>
<feature type="binding site" evidence="1">
    <location>
        <position position="100"/>
    </location>
    <ligand>
        <name>[4Fe-4S] cluster</name>
        <dbReference type="ChEBI" id="CHEBI:49883"/>
        <label>1</label>
    </ligand>
</feature>
<gene>
    <name evidence="1" type="primary">nuoI2</name>
    <name type="ordered locus">Gmet_3347</name>
</gene>
<accession>Q39QB5</accession>
<proteinExistence type="inferred from homology"/>
<name>NUOI2_GEOMG</name>